<dbReference type="EMBL" id="CP000912">
    <property type="protein sequence ID" value="ABY40235.1"/>
    <property type="molecule type" value="Genomic_DNA"/>
</dbReference>
<dbReference type="RefSeq" id="WP_006074566.1">
    <property type="nucleotide sequence ID" value="NC_010167.1"/>
</dbReference>
<dbReference type="SMR" id="A9WWU9"/>
<dbReference type="KEGG" id="bmt:BSUIS_B1302"/>
<dbReference type="HOGENOM" id="CLU_100590_3_1_5"/>
<dbReference type="Proteomes" id="UP000008545">
    <property type="component" value="Chromosome II"/>
</dbReference>
<dbReference type="GO" id="GO:0005737">
    <property type="term" value="C:cytoplasm"/>
    <property type="evidence" value="ECO:0007669"/>
    <property type="project" value="UniProtKB-ARBA"/>
</dbReference>
<dbReference type="GO" id="GO:0015935">
    <property type="term" value="C:small ribosomal subunit"/>
    <property type="evidence" value="ECO:0007669"/>
    <property type="project" value="TreeGrafter"/>
</dbReference>
<dbReference type="GO" id="GO:0003735">
    <property type="term" value="F:structural constituent of ribosome"/>
    <property type="evidence" value="ECO:0007669"/>
    <property type="project" value="InterPro"/>
</dbReference>
<dbReference type="GO" id="GO:0006412">
    <property type="term" value="P:translation"/>
    <property type="evidence" value="ECO:0007669"/>
    <property type="project" value="UniProtKB-UniRule"/>
</dbReference>
<dbReference type="Gene3D" id="3.30.1320.10">
    <property type="match status" value="1"/>
</dbReference>
<dbReference type="HAMAP" id="MF_00385">
    <property type="entry name" value="Ribosomal_bS16"/>
    <property type="match status" value="1"/>
</dbReference>
<dbReference type="InterPro" id="IPR000307">
    <property type="entry name" value="Ribosomal_bS16"/>
</dbReference>
<dbReference type="InterPro" id="IPR023803">
    <property type="entry name" value="Ribosomal_bS16_dom_sf"/>
</dbReference>
<dbReference type="NCBIfam" id="TIGR00002">
    <property type="entry name" value="S16"/>
    <property type="match status" value="1"/>
</dbReference>
<dbReference type="PANTHER" id="PTHR12919">
    <property type="entry name" value="30S RIBOSOMAL PROTEIN S16"/>
    <property type="match status" value="1"/>
</dbReference>
<dbReference type="PANTHER" id="PTHR12919:SF20">
    <property type="entry name" value="SMALL RIBOSOMAL SUBUNIT PROTEIN BS16M"/>
    <property type="match status" value="1"/>
</dbReference>
<dbReference type="Pfam" id="PF00886">
    <property type="entry name" value="Ribosomal_S16"/>
    <property type="match status" value="1"/>
</dbReference>
<dbReference type="SUPFAM" id="SSF54565">
    <property type="entry name" value="Ribosomal protein S16"/>
    <property type="match status" value="1"/>
</dbReference>
<gene>
    <name evidence="1" type="primary">rpsP</name>
    <name type="ordered locus">BSUIS_B1302</name>
</gene>
<reference key="1">
    <citation type="submission" date="2007-12" db="EMBL/GenBank/DDBJ databases">
        <title>Brucella suis ATCC 23445 whole genome shotgun sequencing project.</title>
        <authorList>
            <person name="Setubal J.C."/>
            <person name="Bowns C."/>
            <person name="Boyle S."/>
            <person name="Crasta O.R."/>
            <person name="Czar M.J."/>
            <person name="Dharmanolla C."/>
            <person name="Gillespie J.J."/>
            <person name="Kenyon R.W."/>
            <person name="Lu J."/>
            <person name="Mane S."/>
            <person name="Mohapatra S."/>
            <person name="Nagrani S."/>
            <person name="Purkayastha A."/>
            <person name="Rajasimha H.K."/>
            <person name="Shallom J.M."/>
            <person name="Shallom S."/>
            <person name="Shukla M."/>
            <person name="Snyder E.E."/>
            <person name="Sobral B.W."/>
            <person name="Wattam A.R."/>
            <person name="Will R."/>
            <person name="Williams K."/>
            <person name="Yoo H."/>
            <person name="Bruce D."/>
            <person name="Detter C."/>
            <person name="Munk C."/>
            <person name="Brettin T.S."/>
        </authorList>
    </citation>
    <scope>NUCLEOTIDE SEQUENCE [LARGE SCALE GENOMIC DNA]</scope>
    <source>
        <strain>ATCC 23445 / NCTC 10510</strain>
    </source>
</reference>
<keyword id="KW-0687">Ribonucleoprotein</keyword>
<keyword id="KW-0689">Ribosomal protein</keyword>
<evidence type="ECO:0000255" key="1">
    <source>
        <dbReference type="HAMAP-Rule" id="MF_00385"/>
    </source>
</evidence>
<evidence type="ECO:0000256" key="2">
    <source>
        <dbReference type="SAM" id="MobiDB-lite"/>
    </source>
</evidence>
<evidence type="ECO:0000305" key="3"/>
<comment type="similarity">
    <text evidence="1">Belongs to the bacterial ribosomal protein bS16 family.</text>
</comment>
<proteinExistence type="inferred from homology"/>
<name>RS16_BRUSI</name>
<protein>
    <recommendedName>
        <fullName evidence="1">Small ribosomal subunit protein bS16</fullName>
    </recommendedName>
    <alternativeName>
        <fullName evidence="3">30S ribosomal protein S16</fullName>
    </alternativeName>
</protein>
<sequence>MALKIRLARAGSKKRPYYHVVVADVRAPRDGRFIETVGSWNPVLLKDAERVKLDAERIQHWIAQGAQPTDRVLRFLDQAGIAKRPSRNNPTKGEPGKKAQERLALAKQAEEEAAAKAAEAAAAAAAPAEEAASE</sequence>
<accession>A9WWU9</accession>
<feature type="chain" id="PRO_1000080138" description="Small ribosomal subunit protein bS16">
    <location>
        <begin position="1"/>
        <end position="134"/>
    </location>
</feature>
<feature type="region of interest" description="Disordered" evidence="2">
    <location>
        <begin position="79"/>
        <end position="134"/>
    </location>
</feature>
<feature type="compositionally biased region" description="Low complexity" evidence="2">
    <location>
        <begin position="115"/>
        <end position="134"/>
    </location>
</feature>
<organism>
    <name type="scientific">Brucella suis (strain ATCC 23445 / NCTC 10510)</name>
    <dbReference type="NCBI Taxonomy" id="470137"/>
    <lineage>
        <taxon>Bacteria</taxon>
        <taxon>Pseudomonadati</taxon>
        <taxon>Pseudomonadota</taxon>
        <taxon>Alphaproteobacteria</taxon>
        <taxon>Hyphomicrobiales</taxon>
        <taxon>Brucellaceae</taxon>
        <taxon>Brucella/Ochrobactrum group</taxon>
        <taxon>Brucella</taxon>
    </lineage>
</organism>